<reference key="1">
    <citation type="journal article" date="2007" name="J. Bacteriol.">
        <title>The complete genome sequence of Campylobacter jejuni strain 81116 (NCTC11828).</title>
        <authorList>
            <person name="Pearson B.M."/>
            <person name="Gaskin D.J.H."/>
            <person name="Segers R.P.A.M."/>
            <person name="Wells J.M."/>
            <person name="Nuijten P.J.M."/>
            <person name="van Vliet A.H.M."/>
        </authorList>
    </citation>
    <scope>NUCLEOTIDE SEQUENCE [LARGE SCALE GENOMIC DNA]</scope>
    <source>
        <strain>81116 / NCTC 11828</strain>
    </source>
</reference>
<accession>A8FKB7</accession>
<evidence type="ECO:0000255" key="1">
    <source>
        <dbReference type="HAMAP-Rule" id="MF_01815"/>
    </source>
</evidence>
<sequence length="324" mass="35192">MLKASLKSIASYIPEKILSNADLEKMVDTTDEWITRRTGIKERRIASENENTSDLGTKAALKAIKRANLKPEDIDAILVATLSPDYFTMPSTACKIASNLGLVNISAFDISAACSGFIYLLEQAKALVESGLKKNVLIIGAEKTSSIMDYNDRSICILFGDGAGAGVVSLDNENHILDVHTASNGNYGDLLMTQRSQKSNLCQTLSMQMKGNEVFKIAVNTLSNDVVEILAKNNILAQEIDLFIPHQANLRIIKAVQEKLNLSDEKCVITVQKYGNTSAASIPMAMNDAYEEGRLKKGDLILLDAFGGGFTWGSALLKFGGENF</sequence>
<proteinExistence type="inferred from homology"/>
<gene>
    <name evidence="1" type="primary">fabH</name>
    <name type="ordered locus">C8J_0305</name>
</gene>
<organism>
    <name type="scientific">Campylobacter jejuni subsp. jejuni serotype O:6 (strain 81116 / NCTC 11828)</name>
    <dbReference type="NCBI Taxonomy" id="407148"/>
    <lineage>
        <taxon>Bacteria</taxon>
        <taxon>Pseudomonadati</taxon>
        <taxon>Campylobacterota</taxon>
        <taxon>Epsilonproteobacteria</taxon>
        <taxon>Campylobacterales</taxon>
        <taxon>Campylobacteraceae</taxon>
        <taxon>Campylobacter</taxon>
    </lineage>
</organism>
<dbReference type="EC" id="2.3.1.180" evidence="1"/>
<dbReference type="EMBL" id="CP000814">
    <property type="protein sequence ID" value="ABV51904.1"/>
    <property type="molecule type" value="Genomic_DNA"/>
</dbReference>
<dbReference type="RefSeq" id="WP_002866654.1">
    <property type="nucleotide sequence ID" value="NC_009839.1"/>
</dbReference>
<dbReference type="SMR" id="A8FKB7"/>
<dbReference type="KEGG" id="cju:C8J_0305"/>
<dbReference type="HOGENOM" id="CLU_039592_4_0_7"/>
<dbReference type="UniPathway" id="UPA00094"/>
<dbReference type="GO" id="GO:0005737">
    <property type="term" value="C:cytoplasm"/>
    <property type="evidence" value="ECO:0007669"/>
    <property type="project" value="UniProtKB-SubCell"/>
</dbReference>
<dbReference type="GO" id="GO:0004315">
    <property type="term" value="F:3-oxoacyl-[acyl-carrier-protein] synthase activity"/>
    <property type="evidence" value="ECO:0007669"/>
    <property type="project" value="InterPro"/>
</dbReference>
<dbReference type="GO" id="GO:0033818">
    <property type="term" value="F:beta-ketoacyl-acyl-carrier-protein synthase III activity"/>
    <property type="evidence" value="ECO:0007669"/>
    <property type="project" value="UniProtKB-UniRule"/>
</dbReference>
<dbReference type="GO" id="GO:0006633">
    <property type="term" value="P:fatty acid biosynthetic process"/>
    <property type="evidence" value="ECO:0007669"/>
    <property type="project" value="UniProtKB-UniRule"/>
</dbReference>
<dbReference type="GO" id="GO:0044550">
    <property type="term" value="P:secondary metabolite biosynthetic process"/>
    <property type="evidence" value="ECO:0007669"/>
    <property type="project" value="TreeGrafter"/>
</dbReference>
<dbReference type="CDD" id="cd00830">
    <property type="entry name" value="KAS_III"/>
    <property type="match status" value="1"/>
</dbReference>
<dbReference type="FunFam" id="3.40.47.10:FF:000004">
    <property type="entry name" value="3-oxoacyl-[acyl-carrier-protein] synthase 3"/>
    <property type="match status" value="1"/>
</dbReference>
<dbReference type="Gene3D" id="3.40.47.10">
    <property type="match status" value="1"/>
</dbReference>
<dbReference type="HAMAP" id="MF_01815">
    <property type="entry name" value="FabH"/>
    <property type="match status" value="1"/>
</dbReference>
<dbReference type="InterPro" id="IPR013747">
    <property type="entry name" value="ACP_syn_III_C"/>
</dbReference>
<dbReference type="InterPro" id="IPR013751">
    <property type="entry name" value="ACP_syn_III_N"/>
</dbReference>
<dbReference type="InterPro" id="IPR004655">
    <property type="entry name" value="FabH"/>
</dbReference>
<dbReference type="InterPro" id="IPR016039">
    <property type="entry name" value="Thiolase-like"/>
</dbReference>
<dbReference type="NCBIfam" id="TIGR00747">
    <property type="entry name" value="fabH"/>
    <property type="match status" value="1"/>
</dbReference>
<dbReference type="NCBIfam" id="NF006829">
    <property type="entry name" value="PRK09352.1"/>
    <property type="match status" value="1"/>
</dbReference>
<dbReference type="PANTHER" id="PTHR34069">
    <property type="entry name" value="3-OXOACYL-[ACYL-CARRIER-PROTEIN] SYNTHASE 3"/>
    <property type="match status" value="1"/>
</dbReference>
<dbReference type="PANTHER" id="PTHR34069:SF2">
    <property type="entry name" value="BETA-KETOACYL-[ACYL-CARRIER-PROTEIN] SYNTHASE III"/>
    <property type="match status" value="1"/>
</dbReference>
<dbReference type="Pfam" id="PF08545">
    <property type="entry name" value="ACP_syn_III"/>
    <property type="match status" value="1"/>
</dbReference>
<dbReference type="Pfam" id="PF08541">
    <property type="entry name" value="ACP_syn_III_C"/>
    <property type="match status" value="1"/>
</dbReference>
<dbReference type="SUPFAM" id="SSF53901">
    <property type="entry name" value="Thiolase-like"/>
    <property type="match status" value="1"/>
</dbReference>
<feature type="chain" id="PRO_1000073680" description="Beta-ketoacyl-[acyl-carrier-protein] synthase III">
    <location>
        <begin position="1"/>
        <end position="324"/>
    </location>
</feature>
<feature type="region of interest" description="ACP-binding" evidence="1">
    <location>
        <begin position="247"/>
        <end position="251"/>
    </location>
</feature>
<feature type="active site" evidence="1">
    <location>
        <position position="114"/>
    </location>
</feature>
<feature type="active site" evidence="1">
    <location>
        <position position="246"/>
    </location>
</feature>
<feature type="active site" evidence="1">
    <location>
        <position position="276"/>
    </location>
</feature>
<name>FABH_CAMJ8</name>
<comment type="function">
    <text evidence="1">Catalyzes the condensation reaction of fatty acid synthesis by the addition to an acyl acceptor of two carbons from malonyl-ACP. Catalyzes the first condensation reaction which initiates fatty acid synthesis and may therefore play a role in governing the total rate of fatty acid production. Possesses both acetoacetyl-ACP synthase and acetyl transacylase activities. Its substrate specificity determines the biosynthesis of branched-chain and/or straight-chain of fatty acids.</text>
</comment>
<comment type="catalytic activity">
    <reaction evidence="1">
        <text>malonyl-[ACP] + acetyl-CoA + H(+) = 3-oxobutanoyl-[ACP] + CO2 + CoA</text>
        <dbReference type="Rhea" id="RHEA:12080"/>
        <dbReference type="Rhea" id="RHEA-COMP:9623"/>
        <dbReference type="Rhea" id="RHEA-COMP:9625"/>
        <dbReference type="ChEBI" id="CHEBI:15378"/>
        <dbReference type="ChEBI" id="CHEBI:16526"/>
        <dbReference type="ChEBI" id="CHEBI:57287"/>
        <dbReference type="ChEBI" id="CHEBI:57288"/>
        <dbReference type="ChEBI" id="CHEBI:78449"/>
        <dbReference type="ChEBI" id="CHEBI:78450"/>
        <dbReference type="EC" id="2.3.1.180"/>
    </reaction>
</comment>
<comment type="pathway">
    <text evidence="1">Lipid metabolism; fatty acid biosynthesis.</text>
</comment>
<comment type="subunit">
    <text evidence="1">Homodimer.</text>
</comment>
<comment type="subcellular location">
    <subcellularLocation>
        <location evidence="1">Cytoplasm</location>
    </subcellularLocation>
</comment>
<comment type="domain">
    <text evidence="1">The last Arg residue of the ACP-binding site is essential for the weak association between ACP/AcpP and FabH.</text>
</comment>
<comment type="similarity">
    <text evidence="1">Belongs to the thiolase-like superfamily. FabH family.</text>
</comment>
<keyword id="KW-0012">Acyltransferase</keyword>
<keyword id="KW-0963">Cytoplasm</keyword>
<keyword id="KW-0275">Fatty acid biosynthesis</keyword>
<keyword id="KW-0276">Fatty acid metabolism</keyword>
<keyword id="KW-0444">Lipid biosynthesis</keyword>
<keyword id="KW-0443">Lipid metabolism</keyword>
<keyword id="KW-0511">Multifunctional enzyme</keyword>
<keyword id="KW-0808">Transferase</keyword>
<protein>
    <recommendedName>
        <fullName evidence="1">Beta-ketoacyl-[acyl-carrier-protein] synthase III</fullName>
        <shortName evidence="1">Beta-ketoacyl-ACP synthase III</shortName>
        <shortName evidence="1">KAS III</shortName>
        <ecNumber evidence="1">2.3.1.180</ecNumber>
    </recommendedName>
    <alternativeName>
        <fullName evidence="1">3-oxoacyl-[acyl-carrier-protein] synthase 3</fullName>
    </alternativeName>
    <alternativeName>
        <fullName evidence="1">3-oxoacyl-[acyl-carrier-protein] synthase III</fullName>
    </alternativeName>
</protein>